<name>Y2073_MYCTO</name>
<protein>
    <recommendedName>
        <fullName>Uncharacterized oxidoreductase MT2133</fullName>
        <ecNumber>1.-.-.-</ecNumber>
    </recommendedName>
</protein>
<keyword id="KW-0560">Oxidoreductase</keyword>
<keyword id="KW-1185">Reference proteome</keyword>
<comment type="similarity">
    <text evidence="3">Belongs to the short-chain dehydrogenases/reductases (SDR) family.</text>
</comment>
<proteinExistence type="inferred from homology"/>
<organism>
    <name type="scientific">Mycobacterium tuberculosis (strain CDC 1551 / Oshkosh)</name>
    <dbReference type="NCBI Taxonomy" id="83331"/>
    <lineage>
        <taxon>Bacteria</taxon>
        <taxon>Bacillati</taxon>
        <taxon>Actinomycetota</taxon>
        <taxon>Actinomycetes</taxon>
        <taxon>Mycobacteriales</taxon>
        <taxon>Mycobacteriaceae</taxon>
        <taxon>Mycobacterium</taxon>
        <taxon>Mycobacterium tuberculosis complex</taxon>
    </lineage>
</organism>
<sequence>MDDTGAAPVVIFGGRSQIGGELARRLAAGATMVLAARNADQLADQAAALRAAGAIAVHTREFDADDLAAHGPLVASLVAEHGPIGTAVLAFGILGDQARAETDAAHAVAIVHTDYVAQVSLLTHLAAAMRTAGRGSLVVFSSVAGIRVRRANYVYGSAKAGLDGFASGLADALHGTGVRLLIARPGFVIGRMTEGMTPAPLSVTPERVAAATACALVNGKRVVWIPWALRPMFVALRLLPRFVWRRMPR</sequence>
<feature type="chain" id="PRO_0000428317" description="Uncharacterized oxidoreductase MT2133">
    <location>
        <begin position="1"/>
        <end position="249"/>
    </location>
</feature>
<feature type="active site" description="Proton acceptor" evidence="2">
    <location>
        <position position="155"/>
    </location>
</feature>
<feature type="binding site" evidence="1">
    <location>
        <begin position="11"/>
        <end position="34"/>
    </location>
    <ligand>
        <name>NADP(+)</name>
        <dbReference type="ChEBI" id="CHEBI:58349"/>
    </ligand>
</feature>
<feature type="binding site" evidence="1">
    <location>
        <position position="142"/>
    </location>
    <ligand>
        <name>substrate</name>
    </ligand>
</feature>
<reference key="1">
    <citation type="journal article" date="2002" name="J. Bacteriol.">
        <title>Whole-genome comparison of Mycobacterium tuberculosis clinical and laboratory strains.</title>
        <authorList>
            <person name="Fleischmann R.D."/>
            <person name="Alland D."/>
            <person name="Eisen J.A."/>
            <person name="Carpenter L."/>
            <person name="White O."/>
            <person name="Peterson J.D."/>
            <person name="DeBoy R.T."/>
            <person name="Dodson R.J."/>
            <person name="Gwinn M.L."/>
            <person name="Haft D.H."/>
            <person name="Hickey E.K."/>
            <person name="Kolonay J.F."/>
            <person name="Nelson W.C."/>
            <person name="Umayam L.A."/>
            <person name="Ermolaeva M.D."/>
            <person name="Salzberg S.L."/>
            <person name="Delcher A."/>
            <person name="Utterback T.R."/>
            <person name="Weidman J.F."/>
            <person name="Khouri H.M."/>
            <person name="Gill J."/>
            <person name="Mikula A."/>
            <person name="Bishai W."/>
            <person name="Jacobs W.R. Jr."/>
            <person name="Venter J.C."/>
            <person name="Fraser C.M."/>
        </authorList>
    </citation>
    <scope>NUCLEOTIDE SEQUENCE [LARGE SCALE GENOMIC DNA]</scope>
    <source>
        <strain>CDC 1551 / Oshkosh</strain>
    </source>
</reference>
<evidence type="ECO:0000250" key="1"/>
<evidence type="ECO:0000255" key="2">
    <source>
        <dbReference type="PROSITE-ProRule" id="PRU10001"/>
    </source>
</evidence>
<evidence type="ECO:0000305" key="3"/>
<dbReference type="EC" id="1.-.-.-"/>
<dbReference type="EMBL" id="AE000516">
    <property type="protein sequence ID" value="AAK46413.1"/>
    <property type="molecule type" value="Genomic_DNA"/>
</dbReference>
<dbReference type="PIR" id="D70765">
    <property type="entry name" value="D70765"/>
</dbReference>
<dbReference type="RefSeq" id="WP_003899156.1">
    <property type="nucleotide sequence ID" value="NZ_KK341227.1"/>
</dbReference>
<dbReference type="SMR" id="P9WGR2"/>
<dbReference type="KEGG" id="mtc:MT2133"/>
<dbReference type="PATRIC" id="fig|83331.31.peg.2301"/>
<dbReference type="HOGENOM" id="CLU_010194_2_1_11"/>
<dbReference type="Proteomes" id="UP000001020">
    <property type="component" value="Chromosome"/>
</dbReference>
<dbReference type="GO" id="GO:0016491">
    <property type="term" value="F:oxidoreductase activity"/>
    <property type="evidence" value="ECO:0007669"/>
    <property type="project" value="UniProtKB-KW"/>
</dbReference>
<dbReference type="Gene3D" id="3.40.50.720">
    <property type="entry name" value="NAD(P)-binding Rossmann-like Domain"/>
    <property type="match status" value="1"/>
</dbReference>
<dbReference type="InterPro" id="IPR036291">
    <property type="entry name" value="NAD(P)-bd_dom_sf"/>
</dbReference>
<dbReference type="InterPro" id="IPR020904">
    <property type="entry name" value="Sc_DH/Rdtase_CS"/>
</dbReference>
<dbReference type="InterPro" id="IPR002347">
    <property type="entry name" value="SDR_fam"/>
</dbReference>
<dbReference type="PANTHER" id="PTHR43669">
    <property type="entry name" value="5-KETO-D-GLUCONATE 5-REDUCTASE"/>
    <property type="match status" value="1"/>
</dbReference>
<dbReference type="PANTHER" id="PTHR43669:SF6">
    <property type="entry name" value="DECAPRENYLPHOSPHORYL-2-KETO-BETA-D-ERYTHRO-PENTOSE REDUCTASE"/>
    <property type="match status" value="1"/>
</dbReference>
<dbReference type="Pfam" id="PF00106">
    <property type="entry name" value="adh_short"/>
    <property type="match status" value="1"/>
</dbReference>
<dbReference type="PRINTS" id="PR00081">
    <property type="entry name" value="GDHRDH"/>
</dbReference>
<dbReference type="SUPFAM" id="SSF51735">
    <property type="entry name" value="NAD(P)-binding Rossmann-fold domains"/>
    <property type="match status" value="1"/>
</dbReference>
<dbReference type="PROSITE" id="PS00061">
    <property type="entry name" value="ADH_SHORT"/>
    <property type="match status" value="1"/>
</dbReference>
<gene>
    <name type="ordered locus">MT2133</name>
</gene>
<accession>P9WGR2</accession>
<accession>L0T8J4</accession>
<accession>Q10681</accession>